<evidence type="ECO:0000250" key="1">
    <source>
        <dbReference type="UniProtKB" id="O35405"/>
    </source>
</evidence>
<evidence type="ECO:0000250" key="2">
    <source>
        <dbReference type="UniProtKB" id="Q8BG07"/>
    </source>
</evidence>
<evidence type="ECO:0000250" key="3">
    <source>
        <dbReference type="UniProtKB" id="Q8IV08"/>
    </source>
</evidence>
<evidence type="ECO:0000255" key="4">
    <source>
        <dbReference type="PROSITE-ProRule" id="PRU00153"/>
    </source>
</evidence>
<evidence type="ECO:0000305" key="5"/>
<evidence type="ECO:0007744" key="6">
    <source>
    </source>
</evidence>
<gene>
    <name type="primary">Pld3</name>
</gene>
<reference key="1">
    <citation type="journal article" date="2004" name="Genome Res.">
        <title>The status, quality, and expansion of the NIH full-length cDNA project: the Mammalian Gene Collection (MGC).</title>
        <authorList>
            <consortium name="The MGC Project Team"/>
        </authorList>
    </citation>
    <scope>NUCLEOTIDE SEQUENCE [LARGE SCALE MRNA]</scope>
    <source>
        <tissue>Brain</tissue>
    </source>
</reference>
<reference key="2">
    <citation type="journal article" date="2013" name="J. Proteome Res.">
        <title>Site-specific glycan-peptide analysis for determination of N-glycoproteome heterogeneity.</title>
        <authorList>
            <person name="Parker B.L."/>
            <person name="Thaysen-Andersen M."/>
            <person name="Solis N."/>
            <person name="Scott N.E."/>
            <person name="Larsen M.R."/>
            <person name="Graham M.E."/>
            <person name="Packer N.H."/>
            <person name="Cordwell S.J."/>
        </authorList>
    </citation>
    <scope>GLYCOSYLATION [LARGE SCALE ANALYSIS] AT ASN-385</scope>
    <scope>IDENTIFICATION BY MASS SPECTROMETRY [LARGE SCALE ANALYSIS]</scope>
    <source>
        <tissue>Brain</tissue>
    </source>
</reference>
<proteinExistence type="evidence at protein level"/>
<protein>
    <recommendedName>
        <fullName>5'-3' exonuclease PLD3</fullName>
        <ecNumber evidence="3">3.1.16.1</ecNumber>
    </recommendedName>
    <alternativeName>
        <fullName>(S,S)-bis(monoacylglycero)phosphate synthase PLD3</fullName>
        <ecNumber evidence="3">3.1.4.-</ecNumber>
    </alternativeName>
    <alternativeName>
        <fullName>Phospholipase D3</fullName>
    </alternativeName>
</protein>
<organism>
    <name type="scientific">Rattus norvegicus</name>
    <name type="common">Rat</name>
    <dbReference type="NCBI Taxonomy" id="10116"/>
    <lineage>
        <taxon>Eukaryota</taxon>
        <taxon>Metazoa</taxon>
        <taxon>Chordata</taxon>
        <taxon>Craniata</taxon>
        <taxon>Vertebrata</taxon>
        <taxon>Euteleostomi</taxon>
        <taxon>Mammalia</taxon>
        <taxon>Eutheria</taxon>
        <taxon>Euarchontoglires</taxon>
        <taxon>Glires</taxon>
        <taxon>Rodentia</taxon>
        <taxon>Myomorpha</taxon>
        <taxon>Muroidea</taxon>
        <taxon>Muridae</taxon>
        <taxon>Murinae</taxon>
        <taxon>Rattus</taxon>
    </lineage>
</organism>
<sequence length="488" mass="54399">MKPKLMYQELKVPVEEPAGELPMNEIEAWKAAEKKARWVLLVLILAVVGFGALMTQLFLWEYGDLHLFGPNQHPAPCYDPCEAVLVESIPEGLEFPNATTSNPSTSQAWLGLLAGAHSSLDIASFYWTLTNNDTHTQEPSAQQGEEVLQQLQALAPRGVKVRIAVSKPNGPLADLQSLLQSGAQVRMVDMQKLTHGVLHTKFWVVDQTHFYLGSANMDWRSLTQVKELGVVMYNCSCLARDLTKIFEAYWFLGQAGSSIPSTWPRPFDTRYNQETPMEICLNGTPALAYLASAPPPLCPGGRTPDLKALLSVVDNARSFIYIAVMNYLPTMEFSHPRRFWPAIDDGLRRAAYERGVKVRLLISCWGHSEPSMRSFLLSLAALRDNHTHSDIQVKLFVVPADEAQARIPYARVNHNKYMVTERTTYIGTSNWSGSYFTETAGTSLLVTQNGHGGLRSQLEAVFLRDWESPYSHNLDTSADSVGNACRLL</sequence>
<feature type="chain" id="PRO_0000280330" description="5'-3' exonuclease PLD3">
    <location>
        <begin position="1"/>
        <end position="488"/>
    </location>
</feature>
<feature type="topological domain" description="Cytoplasmic" evidence="3">
    <location>
        <begin position="1"/>
        <end position="38"/>
    </location>
</feature>
<feature type="transmembrane region" description="Helical; Signal-anchor for type II membrane protein" evidence="3">
    <location>
        <begin position="39"/>
        <end position="59"/>
    </location>
</feature>
<feature type="topological domain" description="Lumenal" evidence="3">
    <location>
        <begin position="60"/>
        <end position="488"/>
    </location>
</feature>
<feature type="domain" description="PLD phosphodiesterase 1" evidence="4">
    <location>
        <begin position="194"/>
        <end position="221"/>
    </location>
</feature>
<feature type="domain" description="PLD phosphodiesterase 2" evidence="4">
    <location>
        <begin position="409"/>
        <end position="435"/>
    </location>
</feature>
<feature type="active site" evidence="4">
    <location>
        <position position="199"/>
    </location>
</feature>
<feature type="active site" description="Proton donor" evidence="4">
    <location>
        <position position="199"/>
    </location>
</feature>
<feature type="active site" evidence="4">
    <location>
        <position position="201"/>
    </location>
</feature>
<feature type="active site" evidence="4">
    <location>
        <position position="206"/>
    </location>
</feature>
<feature type="active site" description="Nucleophile" evidence="1">
    <location>
        <position position="414"/>
    </location>
</feature>
<feature type="binding site" evidence="1">
    <location>
        <position position="199"/>
    </location>
    <ligand>
        <name>phosphate</name>
        <dbReference type="ChEBI" id="CHEBI:43474"/>
    </ligand>
    <ligandPart>
        <name>5'-phosphate 2'-deoxynucleoside residue</name>
        <dbReference type="ChEBI" id="CHEBI:136412"/>
    </ligandPart>
</feature>
<feature type="binding site" evidence="1">
    <location>
        <position position="201"/>
    </location>
    <ligand>
        <name>phosphate</name>
        <dbReference type="ChEBI" id="CHEBI:43474"/>
    </ligand>
    <ligandPart>
        <name>5'-phosphate 2'-deoxynucleoside residue</name>
        <dbReference type="ChEBI" id="CHEBI:136412"/>
    </ligandPart>
</feature>
<feature type="binding site" evidence="1">
    <location>
        <position position="216"/>
    </location>
    <ligand>
        <name>phosphate</name>
        <dbReference type="ChEBI" id="CHEBI:43474"/>
    </ligand>
    <ligandPart>
        <name>5'-phosphate 2'-deoxynucleoside residue</name>
        <dbReference type="ChEBI" id="CHEBI:136412"/>
    </ligandPart>
</feature>
<feature type="binding site" evidence="1">
    <location>
        <position position="414"/>
    </location>
    <ligand>
        <name>phosphate</name>
        <dbReference type="ChEBI" id="CHEBI:43474"/>
    </ligand>
    <ligandPart>
        <name>5'-phosphate 2'-deoxynucleoside residue</name>
        <dbReference type="ChEBI" id="CHEBI:136412"/>
    </ligandPart>
</feature>
<feature type="binding site" evidence="3">
    <location>
        <position position="436"/>
    </location>
    <ligand>
        <name>Mg(2+)</name>
        <dbReference type="ChEBI" id="CHEBI:18420"/>
    </ligand>
</feature>
<feature type="site" description="Cleavage; by lysosomal cysteine proteases" evidence="3">
    <location>
        <begin position="71"/>
        <end position="72"/>
    </location>
</feature>
<feature type="glycosylation site" description="N-linked (GlcNAc...) asparagine" evidence="3">
    <location>
        <position position="97"/>
    </location>
</feature>
<feature type="glycosylation site" description="N-linked (GlcNAc...) asparagine" evidence="3">
    <location>
        <position position="132"/>
    </location>
</feature>
<feature type="glycosylation site" description="N-linked (GlcNAc...) asparagine" evidence="3">
    <location>
        <position position="234"/>
    </location>
</feature>
<feature type="glycosylation site" description="N-linked (GlcNAc...) asparagine" evidence="3">
    <location>
        <position position="282"/>
    </location>
</feature>
<feature type="glycosylation site" description="N-linked (GlcNAc...) asparagine" evidence="6">
    <location>
        <position position="385"/>
    </location>
</feature>
<feature type="disulfide bond" evidence="1">
    <location>
        <begin position="77"/>
        <end position="237"/>
    </location>
</feature>
<feature type="disulfide bond" evidence="1">
    <location>
        <begin position="81"/>
        <end position="235"/>
    </location>
</feature>
<feature type="disulfide bond" evidence="1">
    <location>
        <begin position="364"/>
        <end position="485"/>
    </location>
</feature>
<keyword id="KW-1015">Disulfide bond</keyword>
<keyword id="KW-0256">Endoplasmic reticulum</keyword>
<keyword id="KW-0967">Endosome</keyword>
<keyword id="KW-0269">Exonuclease</keyword>
<keyword id="KW-0325">Glycoprotein</keyword>
<keyword id="KW-0333">Golgi apparatus</keyword>
<keyword id="KW-0378">Hydrolase</keyword>
<keyword id="KW-0391">Immunity</keyword>
<keyword id="KW-0395">Inflammatory response</keyword>
<keyword id="KW-0443">Lipid metabolism</keyword>
<keyword id="KW-0458">Lysosome</keyword>
<keyword id="KW-0460">Magnesium</keyword>
<keyword id="KW-0472">Membrane</keyword>
<keyword id="KW-0479">Metal-binding</keyword>
<keyword id="KW-0540">Nuclease</keyword>
<keyword id="KW-1208">Phospholipid metabolism</keyword>
<keyword id="KW-1185">Reference proteome</keyword>
<keyword id="KW-0677">Repeat</keyword>
<keyword id="KW-0735">Signal-anchor</keyword>
<keyword id="KW-0812">Transmembrane</keyword>
<keyword id="KW-1133">Transmembrane helix</keyword>
<keyword id="KW-0832">Ubl conjugation</keyword>
<accession>Q5FVH2</accession>
<name>PLD3_RAT</name>
<comment type="function">
    <text evidence="1 3">5'-&gt;3' exonuclease that hydrolyzes the phosphodiester bond of single-stranded DNA (ssDNA) and RNA molecules to form nucleoside 3'-monophosphates and 5'-end 5'-hydroxy deoxyribonucleotide/ribonucleotide fragments. Partially redundant with PLD4, can cleave all four nucleotides displaying higher efficiency for ssDNA and RNA fragments initiated with uridine and guanosine residues and lower efficiency for cytidine-initiated substrates. As a result, it does not always degrade polynucleotides to the single nucleotide level, it can stall at specific sites sparing certain fragments from exonucleolytic degradation. Processes self and pathogenic ssDNA and RNA molecules that reach the endolysosomal compartment via phagocytosis or autophagy and may serve as 'danger' signals for recognition by innate immune receptors such as toll-like receptors (TLRs). Degrades mitochondrial CpG-rich ssDNA fragments to prevent TLR9 activation and autoinflammatory response, but it can cleave viral RNA to generate ligands for TLR7 activation and initiate antiviral immune responses. In plasmacytoid dendritic cells, it cooperates with endonuclease RNASET2 to release 2',3'-cyclic guanosine monophosphate (2',3'-cGMP), a potent stimulatory ligand for TLR7. Produces 2',3'-cGMPs and cytidine-rich RNA fragments that occupy TLR7 ligand-binding pockets and trigger a signaling-competent state. Can exert polynucleotide phosphatase activity toward 5'-phosphorylated ssDNA substrates although at a slow rate. Transphosphatidylase that catalyzes the exchange with R to S stereo-inversion of the glycerol moiety between (S,R)-lysophosphatidylglycerol (LPG) and monoacylglycerol (MAG) substrates to yield (S,S)-bis(monoacylglycero)phosphate (BMP). Can synthesize a variety of (S,S)-BMPs representing the main phospholipid constituent of lysosomal intralumenal vesicle (ILV) membranes that bind acid hydrolases for lipid degradation. Regulates the homeostasis and interorganellar communication of the endolysosomal system with an overall impact on cellular removal of dysfunctional organelles via autophagy as well as proper protein and lipid turnover. May play a role in myotube formation in response to ER stress.</text>
</comment>
<comment type="catalytic activity">
    <reaction evidence="3">
        <text>Exonucleolytic cleavage in the 5'- to 3'-direction to yield nucleoside 3'-phosphates.</text>
        <dbReference type="EC" id="3.1.16.1"/>
    </reaction>
</comment>
<comment type="catalytic activity">
    <reaction evidence="3">
        <text>a 5'-end 5'-dephospho-ribonucleotidyl-ribonucleotide-RNA + H2O = a ribonucleoside 3'-phosphate + a 5'-end dephospho-ribonucleoside-RNA + H(+)</text>
        <dbReference type="Rhea" id="RHEA:81375"/>
        <dbReference type="Rhea" id="RHEA-COMP:13936"/>
        <dbReference type="Rhea" id="RHEA-COMP:19670"/>
        <dbReference type="ChEBI" id="CHEBI:13197"/>
        <dbReference type="ChEBI" id="CHEBI:15377"/>
        <dbReference type="ChEBI" id="CHEBI:15378"/>
        <dbReference type="ChEBI" id="CHEBI:138284"/>
        <dbReference type="ChEBI" id="CHEBI:231871"/>
    </reaction>
    <physiologicalReaction direction="left-to-right" evidence="3">
        <dbReference type="Rhea" id="RHEA:81376"/>
    </physiologicalReaction>
</comment>
<comment type="catalytic activity">
    <reaction evidence="3">
        <text>a ribonucleoside 3'-phosphate-2'-3'-cyclophospho-GMP + H2O = a ribonucleoside 3'-phosphate + 2',3'-cyclophospho-GMP + H(+)</text>
        <dbReference type="Rhea" id="RHEA:81319"/>
        <dbReference type="ChEBI" id="CHEBI:13197"/>
        <dbReference type="ChEBI" id="CHEBI:15377"/>
        <dbReference type="ChEBI" id="CHEBI:15378"/>
        <dbReference type="ChEBI" id="CHEBI:60837"/>
        <dbReference type="ChEBI" id="CHEBI:231870"/>
    </reaction>
    <physiologicalReaction direction="left-to-right" evidence="3">
        <dbReference type="Rhea" id="RHEA:81320"/>
    </physiologicalReaction>
</comment>
<comment type="catalytic activity">
    <reaction evidence="3">
        <text>a 5'-end 5'-dephospho-2'-deoxyribonucleotidyl-2'-deoxyribonucleotide in single-stranded DNA + H2O = a 5'-end dephospho-2'-deoxyribonucleoside in single-stranded DNA + a 2'-deoxyribonucleoside 3'-phosphate + H(+)</text>
        <dbReference type="Rhea" id="RHEA:81379"/>
        <dbReference type="Rhea" id="RHEA-COMP:19701"/>
        <dbReference type="Rhea" id="RHEA-COMP:19702"/>
        <dbReference type="ChEBI" id="CHEBI:15377"/>
        <dbReference type="ChEBI" id="CHEBI:15378"/>
        <dbReference type="ChEBI" id="CHEBI:131705"/>
        <dbReference type="ChEBI" id="CHEBI:136416"/>
        <dbReference type="ChEBI" id="CHEBI:231873"/>
    </reaction>
    <physiologicalReaction direction="left-to-right" evidence="3">
        <dbReference type="Rhea" id="RHEA:81380"/>
    </physiologicalReaction>
</comment>
<comment type="catalytic activity">
    <reaction evidence="3">
        <text>a 5'-end 5'-phospho-2'-deoxyribonucleotide in single-stranded DNA + H2O = a 5'-end 5'-dephospho-2'-deoxyribonucleotide in single-stranded DNA + phosphate</text>
        <dbReference type="Rhea" id="RHEA:82335"/>
        <dbReference type="Rhea" id="RHEA-COMP:19868"/>
        <dbReference type="Rhea" id="RHEA-COMP:19869"/>
        <dbReference type="ChEBI" id="CHEBI:15377"/>
        <dbReference type="ChEBI" id="CHEBI:43474"/>
        <dbReference type="ChEBI" id="CHEBI:136412"/>
        <dbReference type="ChEBI" id="CHEBI:136416"/>
    </reaction>
    <physiologicalReaction direction="left-to-right" evidence="3">
        <dbReference type="Rhea" id="RHEA:82336"/>
    </physiologicalReaction>
</comment>
<comment type="catalytic activity">
    <reaction evidence="3">
        <text>a 3-lyso-sn-glycero-1-phospho-(3'-acyl-1'-sn-glycerol) + a 1-acyl-sn-glycerol = a 3-acyl-sn-glycero-1-phospho-(3'-acyl-1'-sn-glycerol) + glycerol</text>
        <dbReference type="Rhea" id="RHEA:82563"/>
        <dbReference type="ChEBI" id="CHEBI:17754"/>
        <dbReference type="ChEBI" id="CHEBI:64683"/>
        <dbReference type="ChEBI" id="CHEBI:77717"/>
        <dbReference type="ChEBI" id="CHEBI:232393"/>
    </reaction>
    <physiologicalReaction direction="left-to-right" evidence="3">
        <dbReference type="Rhea" id="RHEA:82564"/>
    </physiologicalReaction>
</comment>
<comment type="catalytic activity">
    <reaction evidence="3">
        <text>3-lyso-sn-glycero-1-phospho-(3'-(9Z-octadecenoyl)-1'-sn-glycerol) + 1-(9Z-octadecenoyl)-sn-glycerol = 3-(9Z-octadecenoyl)-sn-glycero-1-phospho-(3'-(9Z-octadecenoyl)-1'-sn-glycerol) + glycerol</text>
        <dbReference type="Rhea" id="RHEA:82567"/>
        <dbReference type="ChEBI" id="CHEBI:17754"/>
        <dbReference type="ChEBI" id="CHEBI:75757"/>
        <dbReference type="ChEBI" id="CHEBI:139150"/>
        <dbReference type="ChEBI" id="CHEBI:232394"/>
    </reaction>
    <physiologicalReaction direction="left-to-right" evidence="3">
        <dbReference type="Rhea" id="RHEA:82568"/>
    </physiologicalReaction>
</comment>
<comment type="subunit">
    <text evidence="3">Homodimer. Interacts with APP.</text>
</comment>
<comment type="subcellular location">
    <subcellularLocation>
        <location evidence="3">Endoplasmic reticulum membrane</location>
        <topology evidence="3">Single-pass type II membrane protein</topology>
    </subcellularLocation>
    <subcellularLocation>
        <location evidence="3">Lysosome lumen</location>
    </subcellularLocation>
    <subcellularLocation>
        <location evidence="3">Early endosome membrane</location>
        <topology evidence="3">Single-pass type II membrane protein</topology>
    </subcellularLocation>
    <subcellularLocation>
        <location evidence="3">Late endosome membrane</location>
        <topology evidence="3">Single-pass type II membrane protein</topology>
    </subcellularLocation>
    <subcellularLocation>
        <location evidence="3">Golgi apparatus membrane</location>
        <topology evidence="3">Single-pass type II membrane protein</topology>
    </subcellularLocation>
    <subcellularLocation>
        <location evidence="3">Endosome membrane</location>
        <topology evidence="3">Single-pass type II membrane protein</topology>
    </subcellularLocation>
    <text evidence="3">Localizes to ER-associated vesicles in differentiating myotubes. Sorted into intralumenal vesicles (ILVs) in lysosomes. The soluble form in lysosome arises by proteolytic processing of the membrane-bound form. Colocalizes with APP in endosomes.</text>
</comment>
<comment type="domain">
    <text evidence="3">The catalytic domain contains two conserved PLD phosphodiesterase HxK(x4)D(E) motifs that accomodate the phosphate group of the nucleic acid substrates, with one nucleophile histidine residue forming a phosphohistidine intermediate and the other histidine protonating the leaving 5'-OH ssDNA/RNA fragment, resulting in the cleavage of the phosphodiester bond. The homodimer has two independent catalytic domains arranged at the dimer interface.</text>
</comment>
<comment type="PTM">
    <text evidence="3">N-glycosylated.</text>
</comment>
<comment type="PTM">
    <text evidence="3">Proteolytically processed to a soluble form that is stable within endosomes and lysosomes. During transport through the secretory pathway becomes proteolysed by cysteine proteases, thereby releasing a stable soluble lysosomal lumenal polypeptide, whereas the transmembrane-bound fragment is rapidly degraded. Its transport route to lysosomes involves ubiquitination and the ESCRT complex.</text>
</comment>
<comment type="PTM">
    <text evidence="3">Ubiquitinated. Ubiquitination mediates sorting into lysosomes.</text>
</comment>
<comment type="similarity">
    <text evidence="5">Belongs to the phospholipase D family.</text>
</comment>
<comment type="caution">
    <text evidence="1 2">It was initially thought that PDL3 has phospholipase D activity due to its HKD motifs. The second HKD motif contains Glu instead of the canonical Asp. Its enzyme activity is therefore unsure. Catalytic phospholipase D activity is still controversial (By similarity). Its closest homolog PLD4, exhibits no phospholipase activity (By similarity).</text>
</comment>
<dbReference type="EC" id="3.1.16.1" evidence="3"/>
<dbReference type="EC" id="3.1.4.-" evidence="3"/>
<dbReference type="EMBL" id="BC089987">
    <property type="protein sequence ID" value="AAH89987.1"/>
    <property type="molecule type" value="mRNA"/>
</dbReference>
<dbReference type="RefSeq" id="NP_001012167.1">
    <property type="nucleotide sequence ID" value="NM_001012167.1"/>
</dbReference>
<dbReference type="RefSeq" id="XP_006228640.1">
    <property type="nucleotide sequence ID" value="XM_006228578.5"/>
</dbReference>
<dbReference type="RefSeq" id="XP_006228641.1">
    <property type="nucleotide sequence ID" value="XM_006228579.3"/>
</dbReference>
<dbReference type="RefSeq" id="XP_006228642.1">
    <property type="nucleotide sequence ID" value="XM_006228580.3"/>
</dbReference>
<dbReference type="RefSeq" id="XP_006228643.1">
    <property type="nucleotide sequence ID" value="XM_006228581.5"/>
</dbReference>
<dbReference type="RefSeq" id="XP_038937789.1">
    <property type="nucleotide sequence ID" value="XM_039081861.2"/>
</dbReference>
<dbReference type="RefSeq" id="XP_063122470.1">
    <property type="nucleotide sequence ID" value="XM_063266400.1"/>
</dbReference>
<dbReference type="RefSeq" id="XP_063122475.1">
    <property type="nucleotide sequence ID" value="XM_063266405.1"/>
</dbReference>
<dbReference type="SMR" id="Q5FVH2"/>
<dbReference type="BioGRID" id="262748">
    <property type="interactions" value="1"/>
</dbReference>
<dbReference type="FunCoup" id="Q5FVH2">
    <property type="interactions" value="929"/>
</dbReference>
<dbReference type="IntAct" id="Q5FVH2">
    <property type="interactions" value="2"/>
</dbReference>
<dbReference type="STRING" id="10116.ENSRNOP00000054004"/>
<dbReference type="GlyCosmos" id="Q5FVH2">
    <property type="glycosylation" value="2 sites, 2 glycans"/>
</dbReference>
<dbReference type="GlyGen" id="Q5FVH2">
    <property type="glycosylation" value="2 sites, 2 N-linked glycans (1 site), 1 N-linked;o-linked glycan (1 site)"/>
</dbReference>
<dbReference type="iPTMnet" id="Q5FVH2"/>
<dbReference type="PhosphoSitePlus" id="Q5FVH2"/>
<dbReference type="jPOST" id="Q5FVH2"/>
<dbReference type="PaxDb" id="10116-ENSRNOP00000054004"/>
<dbReference type="Ensembl" id="ENSRNOT00000057177.4">
    <property type="protein sequence ID" value="ENSRNOP00000054004.2"/>
    <property type="gene ID" value="ENSRNOG00000018390.7"/>
</dbReference>
<dbReference type="GeneID" id="361527"/>
<dbReference type="KEGG" id="rno:361527"/>
<dbReference type="UCSC" id="RGD:1308248">
    <property type="organism name" value="rat"/>
</dbReference>
<dbReference type="AGR" id="RGD:1308248"/>
<dbReference type="CTD" id="23646"/>
<dbReference type="RGD" id="1308248">
    <property type="gene designation" value="Pld3"/>
</dbReference>
<dbReference type="eggNOG" id="KOG3603">
    <property type="taxonomic scope" value="Eukaryota"/>
</dbReference>
<dbReference type="GeneTree" id="ENSGT00950000183059"/>
<dbReference type="HOGENOM" id="CLU_027021_0_0_1"/>
<dbReference type="InParanoid" id="Q5FVH2"/>
<dbReference type="OrthoDB" id="1923775at2759"/>
<dbReference type="PhylomeDB" id="Q5FVH2"/>
<dbReference type="TreeFam" id="TF313378"/>
<dbReference type="Reactome" id="R-RNO-2029485">
    <property type="pathway name" value="Role of phospholipids in phagocytosis"/>
</dbReference>
<dbReference type="PRO" id="PR:Q5FVH2"/>
<dbReference type="Proteomes" id="UP000002494">
    <property type="component" value="Chromosome 1"/>
</dbReference>
<dbReference type="Bgee" id="ENSRNOG00000018390">
    <property type="expression patterns" value="Expressed in frontal cortex and 19 other cell types or tissues"/>
</dbReference>
<dbReference type="GO" id="GO:0031901">
    <property type="term" value="C:early endosome membrane"/>
    <property type="evidence" value="ECO:0000250"/>
    <property type="project" value="UniProtKB"/>
</dbReference>
<dbReference type="GO" id="GO:0005789">
    <property type="term" value="C:endoplasmic reticulum membrane"/>
    <property type="evidence" value="ECO:0000250"/>
    <property type="project" value="UniProtKB"/>
</dbReference>
<dbReference type="GO" id="GO:0000139">
    <property type="term" value="C:Golgi membrane"/>
    <property type="evidence" value="ECO:0000250"/>
    <property type="project" value="UniProtKB"/>
</dbReference>
<dbReference type="GO" id="GO:0031902">
    <property type="term" value="C:late endosome membrane"/>
    <property type="evidence" value="ECO:0000250"/>
    <property type="project" value="UniProtKB"/>
</dbReference>
<dbReference type="GO" id="GO:0043202">
    <property type="term" value="C:lysosomal lumen"/>
    <property type="evidence" value="ECO:0000250"/>
    <property type="project" value="UniProtKB"/>
</dbReference>
<dbReference type="GO" id="GO:0005765">
    <property type="term" value="C:lysosomal membrane"/>
    <property type="evidence" value="ECO:0000266"/>
    <property type="project" value="RGD"/>
</dbReference>
<dbReference type="GO" id="GO:0046872">
    <property type="term" value="F:metal ion binding"/>
    <property type="evidence" value="ECO:0007669"/>
    <property type="project" value="UniProtKB-KW"/>
</dbReference>
<dbReference type="GO" id="GO:0045145">
    <property type="term" value="F:single-stranded DNA 5'-3' DNA exonuclease activity"/>
    <property type="evidence" value="ECO:0000250"/>
    <property type="project" value="UniProtKB"/>
</dbReference>
<dbReference type="GO" id="GO:0002376">
    <property type="term" value="P:immune system process"/>
    <property type="evidence" value="ECO:0007669"/>
    <property type="project" value="UniProtKB-KW"/>
</dbReference>
<dbReference type="GO" id="GO:0006954">
    <property type="term" value="P:inflammatory response"/>
    <property type="evidence" value="ECO:0007669"/>
    <property type="project" value="UniProtKB-KW"/>
</dbReference>
<dbReference type="GO" id="GO:0006629">
    <property type="term" value="P:lipid metabolic process"/>
    <property type="evidence" value="ECO:0007669"/>
    <property type="project" value="UniProtKB-KW"/>
</dbReference>
<dbReference type="GO" id="GO:0014902">
    <property type="term" value="P:myotube differentiation"/>
    <property type="evidence" value="ECO:0000250"/>
    <property type="project" value="UniProtKB"/>
</dbReference>
<dbReference type="GO" id="GO:1900015">
    <property type="term" value="P:regulation of cytokine production involved in inflammatory response"/>
    <property type="evidence" value="ECO:0000250"/>
    <property type="project" value="UniProtKB"/>
</dbReference>
<dbReference type="CDD" id="cd09144">
    <property type="entry name" value="PLDc_vPLD3_1"/>
    <property type="match status" value="1"/>
</dbReference>
<dbReference type="FunFam" id="3.30.870.10:FF:000013">
    <property type="entry name" value="phospholipase D3 isoform X1"/>
    <property type="match status" value="1"/>
</dbReference>
<dbReference type="FunFam" id="3.30.870.10:FF:000019">
    <property type="entry name" value="phospholipase D3 isoform X1"/>
    <property type="match status" value="1"/>
</dbReference>
<dbReference type="Gene3D" id="3.30.870.10">
    <property type="entry name" value="Endonuclease Chain A"/>
    <property type="match status" value="2"/>
</dbReference>
<dbReference type="InterPro" id="IPR050874">
    <property type="entry name" value="Diverse_PLD-related"/>
</dbReference>
<dbReference type="InterPro" id="IPR032803">
    <property type="entry name" value="PLDc_3"/>
</dbReference>
<dbReference type="InterPro" id="IPR001736">
    <property type="entry name" value="PLipase_D/transphosphatidylase"/>
</dbReference>
<dbReference type="PANTHER" id="PTHR10185:SF16">
    <property type="entry name" value="5'-3' EXONUCLEASE PLD3"/>
    <property type="match status" value="1"/>
</dbReference>
<dbReference type="PANTHER" id="PTHR10185">
    <property type="entry name" value="PHOSPHOLIPASE D - RELATED"/>
    <property type="match status" value="1"/>
</dbReference>
<dbReference type="Pfam" id="PF13918">
    <property type="entry name" value="PLDc_3"/>
    <property type="match status" value="1"/>
</dbReference>
<dbReference type="SMART" id="SM00155">
    <property type="entry name" value="PLDc"/>
    <property type="match status" value="2"/>
</dbReference>
<dbReference type="SUPFAM" id="SSF56024">
    <property type="entry name" value="Phospholipase D/nuclease"/>
    <property type="match status" value="2"/>
</dbReference>
<dbReference type="PROSITE" id="PS50035">
    <property type="entry name" value="PLD"/>
    <property type="match status" value="2"/>
</dbReference>